<reference key="1">
    <citation type="journal article" date="2009" name="PLoS Genet.">
        <title>Organised genome dynamics in the Escherichia coli species results in highly diverse adaptive paths.</title>
        <authorList>
            <person name="Touchon M."/>
            <person name="Hoede C."/>
            <person name="Tenaillon O."/>
            <person name="Barbe V."/>
            <person name="Baeriswyl S."/>
            <person name="Bidet P."/>
            <person name="Bingen E."/>
            <person name="Bonacorsi S."/>
            <person name="Bouchier C."/>
            <person name="Bouvet O."/>
            <person name="Calteau A."/>
            <person name="Chiapello H."/>
            <person name="Clermont O."/>
            <person name="Cruveiller S."/>
            <person name="Danchin A."/>
            <person name="Diard M."/>
            <person name="Dossat C."/>
            <person name="Karoui M.E."/>
            <person name="Frapy E."/>
            <person name="Garry L."/>
            <person name="Ghigo J.M."/>
            <person name="Gilles A.M."/>
            <person name="Johnson J."/>
            <person name="Le Bouguenec C."/>
            <person name="Lescat M."/>
            <person name="Mangenot S."/>
            <person name="Martinez-Jehanne V."/>
            <person name="Matic I."/>
            <person name="Nassif X."/>
            <person name="Oztas S."/>
            <person name="Petit M.A."/>
            <person name="Pichon C."/>
            <person name="Rouy Z."/>
            <person name="Ruf C.S."/>
            <person name="Schneider D."/>
            <person name="Tourret J."/>
            <person name="Vacherie B."/>
            <person name="Vallenet D."/>
            <person name="Medigue C."/>
            <person name="Rocha E.P.C."/>
            <person name="Denamur E."/>
        </authorList>
    </citation>
    <scope>NUCLEOTIDE SEQUENCE [LARGE SCALE GENOMIC DNA]</scope>
    <source>
        <strain>S88 / ExPEC</strain>
    </source>
</reference>
<name>TSGA_ECO45</name>
<accession>B7MCY1</accession>
<comment type="subcellular location">
    <subcellularLocation>
        <location evidence="1">Cell inner membrane</location>
        <topology evidence="1">Multi-pass membrane protein</topology>
    </subcellularLocation>
</comment>
<comment type="similarity">
    <text evidence="1">Belongs to the major facilitator superfamily. TsgA family.</text>
</comment>
<dbReference type="EMBL" id="CU928161">
    <property type="protein sequence ID" value="CAR04970.1"/>
    <property type="molecule type" value="Genomic_DNA"/>
</dbReference>
<dbReference type="RefSeq" id="WP_000185247.1">
    <property type="nucleotide sequence ID" value="NC_011742.1"/>
</dbReference>
<dbReference type="SMR" id="B7MCY1"/>
<dbReference type="GeneID" id="75206308"/>
<dbReference type="KEGG" id="ecz:ECS88_3755"/>
<dbReference type="HOGENOM" id="CLU_056916_0_0_6"/>
<dbReference type="Proteomes" id="UP000000747">
    <property type="component" value="Chromosome"/>
</dbReference>
<dbReference type="GO" id="GO:0005886">
    <property type="term" value="C:plasma membrane"/>
    <property type="evidence" value="ECO:0007669"/>
    <property type="project" value="UniProtKB-SubCell"/>
</dbReference>
<dbReference type="GO" id="GO:0022857">
    <property type="term" value="F:transmembrane transporter activity"/>
    <property type="evidence" value="ECO:0007669"/>
    <property type="project" value="InterPro"/>
</dbReference>
<dbReference type="CDD" id="cd17333">
    <property type="entry name" value="MFS_FucP_MFSD4_like"/>
    <property type="match status" value="1"/>
</dbReference>
<dbReference type="FunFam" id="1.20.1250.20:FF:000032">
    <property type="entry name" value="Protein TsgA"/>
    <property type="match status" value="1"/>
</dbReference>
<dbReference type="FunFam" id="1.20.1250.20:FF:000052">
    <property type="entry name" value="Protein TsgA"/>
    <property type="match status" value="1"/>
</dbReference>
<dbReference type="Gene3D" id="1.20.1250.20">
    <property type="entry name" value="MFS general substrate transporter like domains"/>
    <property type="match status" value="2"/>
</dbReference>
<dbReference type="HAMAP" id="MF_01044">
    <property type="entry name" value="MFS_TsgA"/>
    <property type="match status" value="1"/>
</dbReference>
<dbReference type="InterPro" id="IPR011701">
    <property type="entry name" value="MFS"/>
</dbReference>
<dbReference type="InterPro" id="IPR020846">
    <property type="entry name" value="MFS_dom"/>
</dbReference>
<dbReference type="InterPro" id="IPR036259">
    <property type="entry name" value="MFS_trans_sf"/>
</dbReference>
<dbReference type="InterPro" id="IPR023528">
    <property type="entry name" value="MFS_TsgA"/>
</dbReference>
<dbReference type="InterPro" id="IPR050375">
    <property type="entry name" value="MFS_TsgA-like"/>
</dbReference>
<dbReference type="NCBIfam" id="NF002982">
    <property type="entry name" value="PRK03699.1"/>
    <property type="match status" value="1"/>
</dbReference>
<dbReference type="PANTHER" id="PTHR43702">
    <property type="entry name" value="L-FUCOSE-PROTON SYMPORTER"/>
    <property type="match status" value="1"/>
</dbReference>
<dbReference type="PANTHER" id="PTHR43702:SF3">
    <property type="entry name" value="PROTEIN TSGA"/>
    <property type="match status" value="1"/>
</dbReference>
<dbReference type="Pfam" id="PF07690">
    <property type="entry name" value="MFS_1"/>
    <property type="match status" value="1"/>
</dbReference>
<dbReference type="SUPFAM" id="SSF103473">
    <property type="entry name" value="MFS general substrate transporter"/>
    <property type="match status" value="1"/>
</dbReference>
<dbReference type="PROSITE" id="PS50850">
    <property type="entry name" value="MFS"/>
    <property type="match status" value="1"/>
</dbReference>
<organism>
    <name type="scientific">Escherichia coli O45:K1 (strain S88 / ExPEC)</name>
    <dbReference type="NCBI Taxonomy" id="585035"/>
    <lineage>
        <taxon>Bacteria</taxon>
        <taxon>Pseudomonadati</taxon>
        <taxon>Pseudomonadota</taxon>
        <taxon>Gammaproteobacteria</taxon>
        <taxon>Enterobacterales</taxon>
        <taxon>Enterobacteriaceae</taxon>
        <taxon>Escherichia</taxon>
    </lineage>
</organism>
<gene>
    <name evidence="1" type="primary">tsgA</name>
    <name type="ordered locus">ECS88_3755</name>
</gene>
<protein>
    <recommendedName>
        <fullName evidence="1">Protein TsgA</fullName>
    </recommendedName>
</protein>
<feature type="chain" id="PRO_1000136136" description="Protein TsgA">
    <location>
        <begin position="1"/>
        <end position="393"/>
    </location>
</feature>
<feature type="transmembrane region" description="Helical" evidence="1">
    <location>
        <begin position="11"/>
        <end position="31"/>
    </location>
</feature>
<feature type="transmembrane region" description="Helical" evidence="1">
    <location>
        <begin position="51"/>
        <end position="71"/>
    </location>
</feature>
<feature type="transmembrane region" description="Helical" evidence="1">
    <location>
        <begin position="78"/>
        <end position="98"/>
    </location>
</feature>
<feature type="transmembrane region" description="Helical" evidence="1">
    <location>
        <begin position="101"/>
        <end position="121"/>
    </location>
</feature>
<feature type="transmembrane region" description="Helical" evidence="1">
    <location>
        <begin position="134"/>
        <end position="154"/>
    </location>
</feature>
<feature type="transmembrane region" description="Helical" evidence="1">
    <location>
        <begin position="162"/>
        <end position="182"/>
    </location>
</feature>
<feature type="transmembrane region" description="Helical" evidence="1">
    <location>
        <begin position="206"/>
        <end position="226"/>
    </location>
</feature>
<feature type="transmembrane region" description="Helical" evidence="1">
    <location>
        <begin position="245"/>
        <end position="265"/>
    </location>
</feature>
<feature type="transmembrane region" description="Helical" evidence="1">
    <location>
        <begin position="273"/>
        <end position="293"/>
    </location>
</feature>
<feature type="transmembrane region" description="Helical" evidence="1">
    <location>
        <begin position="297"/>
        <end position="317"/>
    </location>
</feature>
<feature type="transmembrane region" description="Helical" evidence="1">
    <location>
        <begin position="332"/>
        <end position="352"/>
    </location>
</feature>
<feature type="transmembrane region" description="Helical" evidence="1">
    <location>
        <begin position="361"/>
        <end position="381"/>
    </location>
</feature>
<proteinExistence type="inferred from homology"/>
<evidence type="ECO:0000255" key="1">
    <source>
        <dbReference type="HAMAP-Rule" id="MF_01044"/>
    </source>
</evidence>
<keyword id="KW-0997">Cell inner membrane</keyword>
<keyword id="KW-1003">Cell membrane</keyword>
<keyword id="KW-0472">Membrane</keyword>
<keyword id="KW-1185">Reference proteome</keyword>
<keyword id="KW-0812">Transmembrane</keyword>
<keyword id="KW-1133">Transmembrane helix</keyword>
<sequence length="393" mass="43166">MTNSNRIKLTWISFLSYALTGALVIVTGMVMGNIADYFNLPVSSMSNTFTFLNAGILISIFLNAWLMEIVPLKTQLRFGFLLMVLAVAGLMFSHSLALFSAAMFILGVVSGITMSIGTFLVTQMYEGRQRGSRLLFTDSFFSMAGMIFPMIAAFLLARSIEWYWVYACIGLVYVAIFILTFGCEFPALGKHAPKTDAPVEKEKWGIGVLFLSVAALCYILGQLGFISWVPEYAKGLGMSLNDAGTLVSNFWMSYMVGMWAFSFILRFFDLQRILTVLAGLAAILMYVFNTGTPAHMAWSILALGFFSSAIYTTIITLGSQQTKVPSPKLVNFVLTCGTIGTMLTFVVTGPIVEHSGPQAALLTANGLYAVVFVMCFLLGFVSRHRQHNTLTSH</sequence>